<accession>P0AAW4</accession>
<accession>P75772</accession>
<proteinExistence type="predicted"/>
<feature type="chain" id="PRO_0000168719" description="Uncharacterized protein YbhP">
    <location>
        <begin position="1"/>
        <end position="253"/>
    </location>
</feature>
<gene>
    <name type="primary">ybhP</name>
    <name type="ordered locus">SF0740</name>
    <name type="ordered locus">S0781</name>
</gene>
<sequence>MPDQTQQFSFKVLTINIHKGFTAFNRRFILPELRDAVRTVSADIVCLQEVMGAHEVHPLHVENWPDTSHYEFLADTMWSDFAYGRNAVYPEGHHGNAVLSRYPIEHYENRDVSVDGAEKRGVLYCRIVPPMTGKAIHVMCVHLGLREAHRQAQLAMLAEWVNELPDGEPVLVAGDFNDWRQKANHPLKVQAGLDEIFTRAHGRPARTFPVQFPLLRLDRIYVKNASASAPTALPLRTWRHLSDHAPLSAEIHL</sequence>
<reference key="1">
    <citation type="journal article" date="2002" name="Nucleic Acids Res.">
        <title>Genome sequence of Shigella flexneri 2a: insights into pathogenicity through comparison with genomes of Escherichia coli K12 and O157.</title>
        <authorList>
            <person name="Jin Q."/>
            <person name="Yuan Z."/>
            <person name="Xu J."/>
            <person name="Wang Y."/>
            <person name="Shen Y."/>
            <person name="Lu W."/>
            <person name="Wang J."/>
            <person name="Liu H."/>
            <person name="Yang J."/>
            <person name="Yang F."/>
            <person name="Zhang X."/>
            <person name="Zhang J."/>
            <person name="Yang G."/>
            <person name="Wu H."/>
            <person name="Qu D."/>
            <person name="Dong J."/>
            <person name="Sun L."/>
            <person name="Xue Y."/>
            <person name="Zhao A."/>
            <person name="Gao Y."/>
            <person name="Zhu J."/>
            <person name="Kan B."/>
            <person name="Ding K."/>
            <person name="Chen S."/>
            <person name="Cheng H."/>
            <person name="Yao Z."/>
            <person name="He B."/>
            <person name="Chen R."/>
            <person name="Ma D."/>
            <person name="Qiang B."/>
            <person name="Wen Y."/>
            <person name="Hou Y."/>
            <person name="Yu J."/>
        </authorList>
    </citation>
    <scope>NUCLEOTIDE SEQUENCE [LARGE SCALE GENOMIC DNA]</scope>
    <source>
        <strain>301 / Serotype 2a</strain>
    </source>
</reference>
<reference key="2">
    <citation type="journal article" date="2003" name="Infect. Immun.">
        <title>Complete genome sequence and comparative genomics of Shigella flexneri serotype 2a strain 2457T.</title>
        <authorList>
            <person name="Wei J."/>
            <person name="Goldberg M.B."/>
            <person name="Burland V."/>
            <person name="Venkatesan M.M."/>
            <person name="Deng W."/>
            <person name="Fournier G."/>
            <person name="Mayhew G.F."/>
            <person name="Plunkett G. III"/>
            <person name="Rose D.J."/>
            <person name="Darling A."/>
            <person name="Mau B."/>
            <person name="Perna N.T."/>
            <person name="Payne S.M."/>
            <person name="Runyen-Janecky L.J."/>
            <person name="Zhou S."/>
            <person name="Schwartz D.C."/>
            <person name="Blattner F.R."/>
        </authorList>
    </citation>
    <scope>NUCLEOTIDE SEQUENCE [LARGE SCALE GENOMIC DNA]</scope>
    <source>
        <strain>ATCC 700930 / 2457T / Serotype 2a</strain>
    </source>
</reference>
<keyword id="KW-1185">Reference proteome</keyword>
<dbReference type="EMBL" id="AE005674">
    <property type="protein sequence ID" value="AAN42375.1"/>
    <property type="molecule type" value="Genomic_DNA"/>
</dbReference>
<dbReference type="EMBL" id="AE014073">
    <property type="protein sequence ID" value="AAP16252.1"/>
    <property type="molecule type" value="Genomic_DNA"/>
</dbReference>
<dbReference type="RefSeq" id="NP_706668.1">
    <property type="nucleotide sequence ID" value="NC_004337.2"/>
</dbReference>
<dbReference type="RefSeq" id="WP_001113348.1">
    <property type="nucleotide sequence ID" value="NZ_WPGW01000030.1"/>
</dbReference>
<dbReference type="SMR" id="P0AAW4"/>
<dbReference type="STRING" id="198214.SF0740"/>
<dbReference type="PaxDb" id="198214-SF0740"/>
<dbReference type="GeneID" id="1023702"/>
<dbReference type="KEGG" id="sfl:SF0740"/>
<dbReference type="KEGG" id="sfx:S0781"/>
<dbReference type="PATRIC" id="fig|198214.7.peg.861"/>
<dbReference type="HOGENOM" id="CLU_060500_3_2_6"/>
<dbReference type="Proteomes" id="UP000001006">
    <property type="component" value="Chromosome"/>
</dbReference>
<dbReference type="Proteomes" id="UP000002673">
    <property type="component" value="Chromosome"/>
</dbReference>
<dbReference type="GO" id="GO:0016020">
    <property type="term" value="C:membrane"/>
    <property type="evidence" value="ECO:0007669"/>
    <property type="project" value="GOC"/>
</dbReference>
<dbReference type="GO" id="GO:0003824">
    <property type="term" value="F:catalytic activity"/>
    <property type="evidence" value="ECO:0007669"/>
    <property type="project" value="InterPro"/>
</dbReference>
<dbReference type="GO" id="GO:0006506">
    <property type="term" value="P:GPI anchor biosynthetic process"/>
    <property type="evidence" value="ECO:0007669"/>
    <property type="project" value="TreeGrafter"/>
</dbReference>
<dbReference type="FunFam" id="3.60.10.10:FF:000020">
    <property type="entry name" value="Endonuclease/exonuclease/phosphatase family protein"/>
    <property type="match status" value="1"/>
</dbReference>
<dbReference type="Gene3D" id="3.60.10.10">
    <property type="entry name" value="Endonuclease/exonuclease/phosphatase"/>
    <property type="match status" value="1"/>
</dbReference>
<dbReference type="InterPro" id="IPR036691">
    <property type="entry name" value="Endo/exonu/phosph_ase_sf"/>
</dbReference>
<dbReference type="InterPro" id="IPR005135">
    <property type="entry name" value="Endo/exonuclease/phosphatase"/>
</dbReference>
<dbReference type="InterPro" id="IPR051916">
    <property type="entry name" value="GPI-anchor_lipid_remodeler"/>
</dbReference>
<dbReference type="PANTHER" id="PTHR14859">
    <property type="entry name" value="CALCOFLUOR WHITE HYPERSENSITIVE PROTEIN PRECURSOR"/>
    <property type="match status" value="1"/>
</dbReference>
<dbReference type="PANTHER" id="PTHR14859:SF15">
    <property type="entry name" value="ENDONUCLEASE_EXONUCLEASE_PHOSPHATASE DOMAIN-CONTAINING PROTEIN"/>
    <property type="match status" value="1"/>
</dbReference>
<dbReference type="Pfam" id="PF03372">
    <property type="entry name" value="Exo_endo_phos"/>
    <property type="match status" value="1"/>
</dbReference>
<dbReference type="SUPFAM" id="SSF56219">
    <property type="entry name" value="DNase I-like"/>
    <property type="match status" value="1"/>
</dbReference>
<protein>
    <recommendedName>
        <fullName>Uncharacterized protein YbhP</fullName>
    </recommendedName>
</protein>
<name>YBHP_SHIFL</name>
<organism>
    <name type="scientific">Shigella flexneri</name>
    <dbReference type="NCBI Taxonomy" id="623"/>
    <lineage>
        <taxon>Bacteria</taxon>
        <taxon>Pseudomonadati</taxon>
        <taxon>Pseudomonadota</taxon>
        <taxon>Gammaproteobacteria</taxon>
        <taxon>Enterobacterales</taxon>
        <taxon>Enterobacteriaceae</taxon>
        <taxon>Shigella</taxon>
    </lineage>
</organism>